<keyword id="KW-0963">Cytoplasm</keyword>
<keyword id="KW-0285">Flavoprotein</keyword>
<keyword id="KW-0288">FMN</keyword>
<keyword id="KW-0520">NAD</keyword>
<keyword id="KW-0560">Oxidoreductase</keyword>
<keyword id="KW-0665">Pyrimidine biosynthesis</keyword>
<keyword id="KW-1185">Reference proteome</keyword>
<dbReference type="EC" id="1.3.1.14"/>
<dbReference type="EMBL" id="CP000140">
    <property type="protein sequence ID" value="ABR42875.1"/>
    <property type="molecule type" value="Genomic_DNA"/>
</dbReference>
<dbReference type="RefSeq" id="WP_008779897.1">
    <property type="nucleotide sequence ID" value="NC_009615.1"/>
</dbReference>
<dbReference type="SMR" id="A6LB11"/>
<dbReference type="STRING" id="435591.BDI_1112"/>
<dbReference type="PaxDb" id="435591-BDI_1112"/>
<dbReference type="KEGG" id="pdi:BDI_1112"/>
<dbReference type="eggNOG" id="COG0167">
    <property type="taxonomic scope" value="Bacteria"/>
</dbReference>
<dbReference type="HOGENOM" id="CLU_042042_0_0_10"/>
<dbReference type="BioCyc" id="PDIS435591:G1G5A-1147-MONOMER"/>
<dbReference type="UniPathway" id="UPA00070">
    <property type="reaction ID" value="UER00945"/>
</dbReference>
<dbReference type="Proteomes" id="UP000000566">
    <property type="component" value="Chromosome"/>
</dbReference>
<dbReference type="GO" id="GO:0005737">
    <property type="term" value="C:cytoplasm"/>
    <property type="evidence" value="ECO:0007669"/>
    <property type="project" value="UniProtKB-SubCell"/>
</dbReference>
<dbReference type="GO" id="GO:0004589">
    <property type="term" value="F:dihydroorotate dehydrogenase (NAD+) activity"/>
    <property type="evidence" value="ECO:0007669"/>
    <property type="project" value="UniProtKB-EC"/>
</dbReference>
<dbReference type="GO" id="GO:0006207">
    <property type="term" value="P:'de novo' pyrimidine nucleobase biosynthetic process"/>
    <property type="evidence" value="ECO:0007669"/>
    <property type="project" value="InterPro"/>
</dbReference>
<dbReference type="GO" id="GO:0044205">
    <property type="term" value="P:'de novo' UMP biosynthetic process"/>
    <property type="evidence" value="ECO:0007669"/>
    <property type="project" value="UniProtKB-UniRule"/>
</dbReference>
<dbReference type="CDD" id="cd04740">
    <property type="entry name" value="DHOD_1B_like"/>
    <property type="match status" value="1"/>
</dbReference>
<dbReference type="FunFam" id="3.20.20.70:FF:000027">
    <property type="entry name" value="Dihydropyrimidine dehydrogenase [NADP(+)]"/>
    <property type="match status" value="1"/>
</dbReference>
<dbReference type="Gene3D" id="3.20.20.70">
    <property type="entry name" value="Aldolase class I"/>
    <property type="match status" value="1"/>
</dbReference>
<dbReference type="HAMAP" id="MF_00224">
    <property type="entry name" value="DHO_dh_type1"/>
    <property type="match status" value="1"/>
</dbReference>
<dbReference type="InterPro" id="IPR013785">
    <property type="entry name" value="Aldolase_TIM"/>
</dbReference>
<dbReference type="InterPro" id="IPR050074">
    <property type="entry name" value="DHO_dehydrogenase"/>
</dbReference>
<dbReference type="InterPro" id="IPR033888">
    <property type="entry name" value="DHOD_1B"/>
</dbReference>
<dbReference type="InterPro" id="IPR024920">
    <property type="entry name" value="Dihydroorotate_DH_1"/>
</dbReference>
<dbReference type="InterPro" id="IPR012135">
    <property type="entry name" value="Dihydroorotate_DH_1_2"/>
</dbReference>
<dbReference type="InterPro" id="IPR005720">
    <property type="entry name" value="Dihydroorotate_DH_cat"/>
</dbReference>
<dbReference type="InterPro" id="IPR001295">
    <property type="entry name" value="Dihydroorotate_DH_CS"/>
</dbReference>
<dbReference type="InterPro" id="IPR049622">
    <property type="entry name" value="Dihydroorotate_DH_I"/>
</dbReference>
<dbReference type="NCBIfam" id="NF005574">
    <property type="entry name" value="PRK07259.1"/>
    <property type="match status" value="1"/>
</dbReference>
<dbReference type="NCBIfam" id="TIGR01037">
    <property type="entry name" value="pyrD_sub1_fam"/>
    <property type="match status" value="1"/>
</dbReference>
<dbReference type="PANTHER" id="PTHR48109:SF1">
    <property type="entry name" value="DIHYDROOROTATE DEHYDROGENASE (FUMARATE)"/>
    <property type="match status" value="1"/>
</dbReference>
<dbReference type="PANTHER" id="PTHR48109">
    <property type="entry name" value="DIHYDROOROTATE DEHYDROGENASE (QUINONE), MITOCHONDRIAL-RELATED"/>
    <property type="match status" value="1"/>
</dbReference>
<dbReference type="Pfam" id="PF01180">
    <property type="entry name" value="DHO_dh"/>
    <property type="match status" value="1"/>
</dbReference>
<dbReference type="PIRSF" id="PIRSF000164">
    <property type="entry name" value="DHO_oxidase"/>
    <property type="match status" value="1"/>
</dbReference>
<dbReference type="SUPFAM" id="SSF51395">
    <property type="entry name" value="FMN-linked oxidoreductases"/>
    <property type="match status" value="1"/>
</dbReference>
<dbReference type="PROSITE" id="PS00911">
    <property type="entry name" value="DHODEHASE_1"/>
    <property type="match status" value="1"/>
</dbReference>
<dbReference type="PROSITE" id="PS00912">
    <property type="entry name" value="DHODEHASE_2"/>
    <property type="match status" value="1"/>
</dbReference>
<gene>
    <name type="primary">pyrD</name>
    <name type="ordered locus">BDI_1112</name>
</gene>
<reference key="1">
    <citation type="journal article" date="2007" name="PLoS Biol.">
        <title>Evolution of symbiotic bacteria in the distal human intestine.</title>
        <authorList>
            <person name="Xu J."/>
            <person name="Mahowald M.A."/>
            <person name="Ley R.E."/>
            <person name="Lozupone C.A."/>
            <person name="Hamady M."/>
            <person name="Martens E.C."/>
            <person name="Henrissat B."/>
            <person name="Coutinho P.M."/>
            <person name="Minx P."/>
            <person name="Latreille P."/>
            <person name="Cordum H."/>
            <person name="Van Brunt A."/>
            <person name="Kim K."/>
            <person name="Fulton R.S."/>
            <person name="Fulton L.A."/>
            <person name="Clifton S.W."/>
            <person name="Wilson R.K."/>
            <person name="Knight R.D."/>
            <person name="Gordon J.I."/>
        </authorList>
    </citation>
    <scope>NUCLEOTIDE SEQUENCE [LARGE SCALE GENOMIC DNA]</scope>
    <source>
        <strain>ATCC 8503 / DSM 20701 / CIP 104284 / JCM 5825 / NCTC 11152</strain>
    </source>
</reference>
<organism>
    <name type="scientific">Parabacteroides distasonis (strain ATCC 8503 / DSM 20701 / CIP 104284 / JCM 5825 / NCTC 11152)</name>
    <dbReference type="NCBI Taxonomy" id="435591"/>
    <lineage>
        <taxon>Bacteria</taxon>
        <taxon>Pseudomonadati</taxon>
        <taxon>Bacteroidota</taxon>
        <taxon>Bacteroidia</taxon>
        <taxon>Bacteroidales</taxon>
        <taxon>Tannerellaceae</taxon>
        <taxon>Parabacteroides</taxon>
    </lineage>
</organism>
<accession>A6LB11</accession>
<comment type="function">
    <text evidence="1">Catalyzes the conversion of dihydroorotate to orotate with NAD(+) as electron acceptor.</text>
</comment>
<comment type="catalytic activity">
    <reaction>
        <text>(S)-dihydroorotate + NAD(+) = orotate + NADH + H(+)</text>
        <dbReference type="Rhea" id="RHEA:13513"/>
        <dbReference type="ChEBI" id="CHEBI:15378"/>
        <dbReference type="ChEBI" id="CHEBI:30839"/>
        <dbReference type="ChEBI" id="CHEBI:30864"/>
        <dbReference type="ChEBI" id="CHEBI:57540"/>
        <dbReference type="ChEBI" id="CHEBI:57945"/>
        <dbReference type="EC" id="1.3.1.14"/>
    </reaction>
</comment>
<comment type="cofactor">
    <cofactor evidence="1">
        <name>FMN</name>
        <dbReference type="ChEBI" id="CHEBI:58210"/>
    </cofactor>
    <text evidence="1">Binds 1 FMN per subunit.</text>
</comment>
<comment type="pathway">
    <text>Pyrimidine metabolism; UMP biosynthesis via de novo pathway; orotate from (S)-dihydroorotate (NAD(+) route): step 1/1.</text>
</comment>
<comment type="subunit">
    <text evidence="1">Heterotetramer of 2 PyrK and 2 PyrD type B subunits.</text>
</comment>
<comment type="subcellular location">
    <subcellularLocation>
        <location evidence="1">Cytoplasm</location>
    </subcellularLocation>
</comment>
<comment type="similarity">
    <text evidence="2">Belongs to the dihydroorotate dehydrogenase family. Type 1 subfamily.</text>
</comment>
<proteinExistence type="inferred from homology"/>
<feature type="chain" id="PRO_1000024139" description="Dihydroorotate dehydrogenase B (NAD(+)), catalytic subunit">
    <location>
        <begin position="1"/>
        <end position="305"/>
    </location>
</feature>
<feature type="active site" description="Nucleophile">
    <location>
        <position position="130"/>
    </location>
</feature>
<feature type="binding site" evidence="1">
    <location>
        <position position="21"/>
    </location>
    <ligand>
        <name>FMN</name>
        <dbReference type="ChEBI" id="CHEBI:58210"/>
    </ligand>
</feature>
<feature type="binding site" evidence="1">
    <location>
        <begin position="45"/>
        <end position="46"/>
    </location>
    <ligand>
        <name>FMN</name>
        <dbReference type="ChEBI" id="CHEBI:58210"/>
    </ligand>
</feature>
<feature type="binding site" evidence="1">
    <location>
        <position position="45"/>
    </location>
    <ligand>
        <name>substrate</name>
    </ligand>
</feature>
<feature type="binding site" evidence="1">
    <location>
        <begin position="69"/>
        <end position="73"/>
    </location>
    <ligand>
        <name>substrate</name>
    </ligand>
</feature>
<feature type="binding site" evidence="1">
    <location>
        <position position="99"/>
    </location>
    <ligand>
        <name>FMN</name>
        <dbReference type="ChEBI" id="CHEBI:58210"/>
    </ligand>
</feature>
<feature type="binding site" evidence="1">
    <location>
        <position position="127"/>
    </location>
    <ligand>
        <name>FMN</name>
        <dbReference type="ChEBI" id="CHEBI:58210"/>
    </ligand>
</feature>
<feature type="binding site" evidence="1">
    <location>
        <position position="127"/>
    </location>
    <ligand>
        <name>substrate</name>
    </ligand>
</feature>
<feature type="binding site" evidence="1">
    <location>
        <position position="165"/>
    </location>
    <ligand>
        <name>FMN</name>
        <dbReference type="ChEBI" id="CHEBI:58210"/>
    </ligand>
</feature>
<feature type="binding site" evidence="1">
    <location>
        <position position="191"/>
    </location>
    <ligand>
        <name>FMN</name>
        <dbReference type="ChEBI" id="CHEBI:58210"/>
    </ligand>
</feature>
<feature type="binding site" evidence="1">
    <location>
        <begin position="192"/>
        <end position="193"/>
    </location>
    <ligand>
        <name>substrate</name>
    </ligand>
</feature>
<feature type="binding site" evidence="1">
    <location>
        <position position="217"/>
    </location>
    <ligand>
        <name>FMN</name>
        <dbReference type="ChEBI" id="CHEBI:58210"/>
    </ligand>
</feature>
<feature type="binding site" evidence="1">
    <location>
        <begin position="243"/>
        <end position="244"/>
    </location>
    <ligand>
        <name>FMN</name>
        <dbReference type="ChEBI" id="CHEBI:58210"/>
    </ligand>
</feature>
<feature type="binding site" evidence="1">
    <location>
        <begin position="265"/>
        <end position="266"/>
    </location>
    <ligand>
        <name>FMN</name>
        <dbReference type="ChEBI" id="CHEBI:58210"/>
    </ligand>
</feature>
<sequence length="305" mass="32773">MAELNVNIGNLPLKNPVMTASGTFGYGIEYADFMDISRLGGIFVKGTTIQPREGNDYPRMAETPSGMLNAVGLQNKGADYFAEHIYPKIKDINTNMIVNVSGSSVETYVECAEKIAELDRIPAIELNISCPNVKQGGMAFGVTTCGAGEVVKAVRRVYPKILIVKLSPNVTDITEIAKAVEAEGADSVSLINTMLGMAIDAEKRKPILSTITGGLSGPCVKPVALRMVWQTYHAVKIPIIGLGGISNWKDAVEFMLAGASAIQIGTYNFVDPTVSIKVIDGLNDYCDRHGFKSVKELIGALDIQR</sequence>
<evidence type="ECO:0000250" key="1"/>
<evidence type="ECO:0000305" key="2"/>
<protein>
    <recommendedName>
        <fullName>Dihydroorotate dehydrogenase B (NAD(+)), catalytic subunit</fullName>
        <shortName>DHOD B</shortName>
        <shortName>DHODase B</shortName>
        <shortName>DHOdehase B</shortName>
        <ecNumber>1.3.1.14</ecNumber>
    </recommendedName>
    <alternativeName>
        <fullName>Dihydroorotate oxidase B</fullName>
    </alternativeName>
    <alternativeName>
        <fullName>Orotate reductase (NADH)</fullName>
    </alternativeName>
</protein>
<name>PYRDB_PARD8</name>